<keyword id="KW-0963">Cytoplasm</keyword>
<keyword id="KW-0274">FAD</keyword>
<keyword id="KW-0285">Flavoprotein</keyword>
<keyword id="KW-0520">NAD</keyword>
<keyword id="KW-1185">Reference proteome</keyword>
<keyword id="KW-0819">tRNA processing</keyword>
<evidence type="ECO:0000255" key="1">
    <source>
        <dbReference type="HAMAP-Rule" id="MF_00129"/>
    </source>
</evidence>
<gene>
    <name evidence="1" type="primary">mnmG</name>
    <name evidence="1" type="synonym">gidA</name>
    <name type="ordered locus">ECA4521</name>
</gene>
<sequence length="629" mass="70033">MFYPDPFDVIVIGGGHAGTEAAMASARMGQQTLLLTHNIDTLGQMSCNPAIGGIGKGHLVKEIDAMGGLMARAVDQAGIQFRILNSSKGPAVRATRAQADRVLYRQAIRTALENQPNLTIFQQAVDDLIVENDRVVGAVTQMGLKFRAKAVVLTVGTFLDGKIHIGLDNYSGGRAGDPPSIPLARRLRELPLRVNRLKTGTPPRIDARTIDFSVLPQQHGDNPMPVFSFLGNAGQHPAQMPCYITHTNEKTHEVIRNNLDRSPMYAGIIEGIGPRYCPSIEDKVMRFADRNTHQIFLEPEGLTSNEIYPNGISTSLPFDVQWQIVRSMAGMENARIVRPGYAIEYDFFDPRDLKPTLENKFVHGLFFAGQINGTTGYEEAAAQGMLAGLNAARLSADKEGWSPRRDQAYLGVLVDDLCTLGTKEPYRMFTSRAEYRLMLREDNADLRLTEMGRELGMVDDHRWARFNEKLENIEKERQRLRDIHVHPQSELLDQVNSLLKTPLSREANGEELLRRPEVDYAQLTALPLFAPGLTDEQAAEQVEIQVKYEGYIARQQDEIEKQLRNENALLPADLDYKQVNGLSNEVIAKLNDHKPSSIGQASRISGITPAAISILLIWLKKQGLLRRSA</sequence>
<reference key="1">
    <citation type="journal article" date="2004" name="Proc. Natl. Acad. Sci. U.S.A.">
        <title>Genome sequence of the enterobacterial phytopathogen Erwinia carotovora subsp. atroseptica and characterization of virulence factors.</title>
        <authorList>
            <person name="Bell K.S."/>
            <person name="Sebaihia M."/>
            <person name="Pritchard L."/>
            <person name="Holden M.T.G."/>
            <person name="Hyman L.J."/>
            <person name="Holeva M.C."/>
            <person name="Thomson N.R."/>
            <person name="Bentley S.D."/>
            <person name="Churcher L.J.C."/>
            <person name="Mungall K."/>
            <person name="Atkin R."/>
            <person name="Bason N."/>
            <person name="Brooks K."/>
            <person name="Chillingworth T."/>
            <person name="Clark K."/>
            <person name="Doggett J."/>
            <person name="Fraser A."/>
            <person name="Hance Z."/>
            <person name="Hauser H."/>
            <person name="Jagels K."/>
            <person name="Moule S."/>
            <person name="Norbertczak H."/>
            <person name="Ormond D."/>
            <person name="Price C."/>
            <person name="Quail M.A."/>
            <person name="Sanders M."/>
            <person name="Walker D."/>
            <person name="Whitehead S."/>
            <person name="Salmond G.P.C."/>
            <person name="Birch P.R.J."/>
            <person name="Parkhill J."/>
            <person name="Toth I.K."/>
        </authorList>
    </citation>
    <scope>NUCLEOTIDE SEQUENCE [LARGE SCALE GENOMIC DNA]</scope>
    <source>
        <strain>SCRI 1043 / ATCC BAA-672</strain>
    </source>
</reference>
<name>MNMG_PECAS</name>
<accession>Q6CYI6</accession>
<protein>
    <recommendedName>
        <fullName evidence="1">tRNA uridine 5-carboxymethylaminomethyl modification enzyme MnmG</fullName>
    </recommendedName>
    <alternativeName>
        <fullName evidence="1">Glucose-inhibited division protein A</fullName>
    </alternativeName>
</protein>
<feature type="chain" id="PRO_0000117098" description="tRNA uridine 5-carboxymethylaminomethyl modification enzyme MnmG">
    <location>
        <begin position="1"/>
        <end position="629"/>
    </location>
</feature>
<feature type="binding site" evidence="1">
    <location>
        <begin position="13"/>
        <end position="18"/>
    </location>
    <ligand>
        <name>FAD</name>
        <dbReference type="ChEBI" id="CHEBI:57692"/>
    </ligand>
</feature>
<feature type="binding site" evidence="1">
    <location>
        <position position="125"/>
    </location>
    <ligand>
        <name>FAD</name>
        <dbReference type="ChEBI" id="CHEBI:57692"/>
    </ligand>
</feature>
<feature type="binding site" evidence="1">
    <location>
        <position position="180"/>
    </location>
    <ligand>
        <name>FAD</name>
        <dbReference type="ChEBI" id="CHEBI:57692"/>
    </ligand>
</feature>
<feature type="binding site" evidence="1">
    <location>
        <begin position="273"/>
        <end position="287"/>
    </location>
    <ligand>
        <name>NAD(+)</name>
        <dbReference type="ChEBI" id="CHEBI:57540"/>
    </ligand>
</feature>
<feature type="binding site" evidence="1">
    <location>
        <position position="370"/>
    </location>
    <ligand>
        <name>FAD</name>
        <dbReference type="ChEBI" id="CHEBI:57692"/>
    </ligand>
</feature>
<organism>
    <name type="scientific">Pectobacterium atrosepticum (strain SCRI 1043 / ATCC BAA-672)</name>
    <name type="common">Erwinia carotovora subsp. atroseptica</name>
    <dbReference type="NCBI Taxonomy" id="218491"/>
    <lineage>
        <taxon>Bacteria</taxon>
        <taxon>Pseudomonadati</taxon>
        <taxon>Pseudomonadota</taxon>
        <taxon>Gammaproteobacteria</taxon>
        <taxon>Enterobacterales</taxon>
        <taxon>Pectobacteriaceae</taxon>
        <taxon>Pectobacterium</taxon>
    </lineage>
</organism>
<comment type="function">
    <text evidence="1">NAD-binding protein involved in the addition of a carboxymethylaminomethyl (cmnm) group at the wobble position (U34) of certain tRNAs, forming tRNA-cmnm(5)s(2)U34.</text>
</comment>
<comment type="cofactor">
    <cofactor evidence="1">
        <name>FAD</name>
        <dbReference type="ChEBI" id="CHEBI:57692"/>
    </cofactor>
</comment>
<comment type="subunit">
    <text evidence="1">Homodimer. Heterotetramer of two MnmE and two MnmG subunits.</text>
</comment>
<comment type="subcellular location">
    <subcellularLocation>
        <location evidence="1">Cytoplasm</location>
    </subcellularLocation>
</comment>
<comment type="similarity">
    <text evidence="1">Belongs to the MnmG family.</text>
</comment>
<proteinExistence type="inferred from homology"/>
<dbReference type="EMBL" id="BX950851">
    <property type="protein sequence ID" value="CAG77416.1"/>
    <property type="molecule type" value="Genomic_DNA"/>
</dbReference>
<dbReference type="RefSeq" id="WP_011095973.1">
    <property type="nucleotide sequence ID" value="NC_004547.2"/>
</dbReference>
<dbReference type="SMR" id="Q6CYI6"/>
<dbReference type="STRING" id="218491.ECA4521"/>
<dbReference type="KEGG" id="eca:ECA4521"/>
<dbReference type="PATRIC" id="fig|218491.5.peg.4608"/>
<dbReference type="eggNOG" id="COG0445">
    <property type="taxonomic scope" value="Bacteria"/>
</dbReference>
<dbReference type="HOGENOM" id="CLU_007831_2_2_6"/>
<dbReference type="OrthoDB" id="9815560at2"/>
<dbReference type="Proteomes" id="UP000007966">
    <property type="component" value="Chromosome"/>
</dbReference>
<dbReference type="GO" id="GO:0005829">
    <property type="term" value="C:cytosol"/>
    <property type="evidence" value="ECO:0007669"/>
    <property type="project" value="TreeGrafter"/>
</dbReference>
<dbReference type="GO" id="GO:0050660">
    <property type="term" value="F:flavin adenine dinucleotide binding"/>
    <property type="evidence" value="ECO:0007669"/>
    <property type="project" value="UniProtKB-UniRule"/>
</dbReference>
<dbReference type="GO" id="GO:0030488">
    <property type="term" value="P:tRNA methylation"/>
    <property type="evidence" value="ECO:0007669"/>
    <property type="project" value="TreeGrafter"/>
</dbReference>
<dbReference type="GO" id="GO:0002098">
    <property type="term" value="P:tRNA wobble uridine modification"/>
    <property type="evidence" value="ECO:0007669"/>
    <property type="project" value="InterPro"/>
</dbReference>
<dbReference type="FunFam" id="1.10.10.1800:FF:000001">
    <property type="entry name" value="tRNA uridine 5-carboxymethylaminomethyl modification enzyme MnmG"/>
    <property type="match status" value="1"/>
</dbReference>
<dbReference type="FunFam" id="1.10.150.570:FF:000001">
    <property type="entry name" value="tRNA uridine 5-carboxymethylaminomethyl modification enzyme MnmG"/>
    <property type="match status" value="1"/>
</dbReference>
<dbReference type="FunFam" id="3.50.50.60:FF:000002">
    <property type="entry name" value="tRNA uridine 5-carboxymethylaminomethyl modification enzyme MnmG"/>
    <property type="match status" value="1"/>
</dbReference>
<dbReference type="FunFam" id="3.50.50.60:FF:000010">
    <property type="entry name" value="tRNA uridine 5-carboxymethylaminomethyl modification enzyme MnmG"/>
    <property type="match status" value="1"/>
</dbReference>
<dbReference type="Gene3D" id="3.50.50.60">
    <property type="entry name" value="FAD/NAD(P)-binding domain"/>
    <property type="match status" value="2"/>
</dbReference>
<dbReference type="Gene3D" id="1.10.150.570">
    <property type="entry name" value="GidA associated domain, C-terminal subdomain"/>
    <property type="match status" value="1"/>
</dbReference>
<dbReference type="Gene3D" id="1.10.10.1800">
    <property type="entry name" value="tRNA uridine 5-carboxymethylaminomethyl modification enzyme MnmG/GidA"/>
    <property type="match status" value="1"/>
</dbReference>
<dbReference type="HAMAP" id="MF_00129">
    <property type="entry name" value="MnmG_GidA"/>
    <property type="match status" value="1"/>
</dbReference>
<dbReference type="InterPro" id="IPR036188">
    <property type="entry name" value="FAD/NAD-bd_sf"/>
</dbReference>
<dbReference type="InterPro" id="IPR049312">
    <property type="entry name" value="GIDA_C_N"/>
</dbReference>
<dbReference type="InterPro" id="IPR004416">
    <property type="entry name" value="MnmG"/>
</dbReference>
<dbReference type="InterPro" id="IPR002218">
    <property type="entry name" value="MnmG-rel"/>
</dbReference>
<dbReference type="InterPro" id="IPR020595">
    <property type="entry name" value="MnmG-rel_CS"/>
</dbReference>
<dbReference type="InterPro" id="IPR026904">
    <property type="entry name" value="MnmG_C"/>
</dbReference>
<dbReference type="InterPro" id="IPR047001">
    <property type="entry name" value="MnmG_C_subdom"/>
</dbReference>
<dbReference type="InterPro" id="IPR044920">
    <property type="entry name" value="MnmG_C_subdom_sf"/>
</dbReference>
<dbReference type="InterPro" id="IPR040131">
    <property type="entry name" value="MnmG_N"/>
</dbReference>
<dbReference type="NCBIfam" id="TIGR00136">
    <property type="entry name" value="mnmG_gidA"/>
    <property type="match status" value="1"/>
</dbReference>
<dbReference type="PANTHER" id="PTHR11806">
    <property type="entry name" value="GLUCOSE INHIBITED DIVISION PROTEIN A"/>
    <property type="match status" value="1"/>
</dbReference>
<dbReference type="PANTHER" id="PTHR11806:SF0">
    <property type="entry name" value="PROTEIN MTO1 HOMOLOG, MITOCHONDRIAL"/>
    <property type="match status" value="1"/>
</dbReference>
<dbReference type="Pfam" id="PF01134">
    <property type="entry name" value="GIDA"/>
    <property type="match status" value="1"/>
</dbReference>
<dbReference type="Pfam" id="PF21680">
    <property type="entry name" value="GIDA_C_1st"/>
    <property type="match status" value="1"/>
</dbReference>
<dbReference type="Pfam" id="PF13932">
    <property type="entry name" value="SAM_GIDA_C"/>
    <property type="match status" value="1"/>
</dbReference>
<dbReference type="SMART" id="SM01228">
    <property type="entry name" value="GIDA_assoc_3"/>
    <property type="match status" value="1"/>
</dbReference>
<dbReference type="SUPFAM" id="SSF51905">
    <property type="entry name" value="FAD/NAD(P)-binding domain"/>
    <property type="match status" value="1"/>
</dbReference>
<dbReference type="PROSITE" id="PS01280">
    <property type="entry name" value="GIDA_1"/>
    <property type="match status" value="1"/>
</dbReference>
<dbReference type="PROSITE" id="PS01281">
    <property type="entry name" value="GIDA_2"/>
    <property type="match status" value="1"/>
</dbReference>